<dbReference type="EC" id="6.3.4.19" evidence="1"/>
<dbReference type="EMBL" id="BX897699">
    <property type="protein sequence ID" value="CAF28239.1"/>
    <property type="molecule type" value="Genomic_DNA"/>
</dbReference>
<dbReference type="RefSeq" id="WP_011181247.1">
    <property type="nucleotide sequence ID" value="NZ_LRIJ02000001.1"/>
</dbReference>
<dbReference type="SMR" id="Q6G5P5"/>
<dbReference type="PaxDb" id="283166-BH14760"/>
<dbReference type="EnsemblBacteria" id="CAF28239">
    <property type="protein sequence ID" value="CAF28239"/>
    <property type="gene ID" value="BH14760"/>
</dbReference>
<dbReference type="GeneID" id="92986091"/>
<dbReference type="KEGG" id="bhe:BH14760"/>
<dbReference type="eggNOG" id="COG0037">
    <property type="taxonomic scope" value="Bacteria"/>
</dbReference>
<dbReference type="OrthoDB" id="9807403at2"/>
<dbReference type="Proteomes" id="UP000000421">
    <property type="component" value="Chromosome"/>
</dbReference>
<dbReference type="GO" id="GO:0005737">
    <property type="term" value="C:cytoplasm"/>
    <property type="evidence" value="ECO:0007669"/>
    <property type="project" value="UniProtKB-SubCell"/>
</dbReference>
<dbReference type="GO" id="GO:0005524">
    <property type="term" value="F:ATP binding"/>
    <property type="evidence" value="ECO:0007669"/>
    <property type="project" value="UniProtKB-UniRule"/>
</dbReference>
<dbReference type="GO" id="GO:0032267">
    <property type="term" value="F:tRNA(Ile)-lysidine synthase activity"/>
    <property type="evidence" value="ECO:0007669"/>
    <property type="project" value="UniProtKB-EC"/>
</dbReference>
<dbReference type="GO" id="GO:0006400">
    <property type="term" value="P:tRNA modification"/>
    <property type="evidence" value="ECO:0007669"/>
    <property type="project" value="UniProtKB-UniRule"/>
</dbReference>
<dbReference type="CDD" id="cd01992">
    <property type="entry name" value="TilS_N"/>
    <property type="match status" value="1"/>
</dbReference>
<dbReference type="Gene3D" id="3.40.50.620">
    <property type="entry name" value="HUPs"/>
    <property type="match status" value="1"/>
</dbReference>
<dbReference type="HAMAP" id="MF_01161">
    <property type="entry name" value="tRNA_Ile_lys_synt"/>
    <property type="match status" value="1"/>
</dbReference>
<dbReference type="InterPro" id="IPR014729">
    <property type="entry name" value="Rossmann-like_a/b/a_fold"/>
</dbReference>
<dbReference type="InterPro" id="IPR011063">
    <property type="entry name" value="TilS/TtcA_N"/>
</dbReference>
<dbReference type="InterPro" id="IPR012094">
    <property type="entry name" value="tRNA_Ile_lys_synt"/>
</dbReference>
<dbReference type="InterPro" id="IPR012795">
    <property type="entry name" value="tRNA_Ile_lys_synt_N"/>
</dbReference>
<dbReference type="NCBIfam" id="TIGR02432">
    <property type="entry name" value="lysidine_TilS_N"/>
    <property type="match status" value="1"/>
</dbReference>
<dbReference type="PANTHER" id="PTHR43033">
    <property type="entry name" value="TRNA(ILE)-LYSIDINE SYNTHASE-RELATED"/>
    <property type="match status" value="1"/>
</dbReference>
<dbReference type="PANTHER" id="PTHR43033:SF1">
    <property type="entry name" value="TRNA(ILE)-LYSIDINE SYNTHASE-RELATED"/>
    <property type="match status" value="1"/>
</dbReference>
<dbReference type="Pfam" id="PF01171">
    <property type="entry name" value="ATP_bind_3"/>
    <property type="match status" value="2"/>
</dbReference>
<dbReference type="SUPFAM" id="SSF52402">
    <property type="entry name" value="Adenine nucleotide alpha hydrolases-like"/>
    <property type="match status" value="1"/>
</dbReference>
<keyword id="KW-0067">ATP-binding</keyword>
<keyword id="KW-0963">Cytoplasm</keyword>
<keyword id="KW-0436">Ligase</keyword>
<keyword id="KW-0547">Nucleotide-binding</keyword>
<keyword id="KW-0819">tRNA processing</keyword>
<organism>
    <name type="scientific">Bartonella henselae (strain ATCC 49882 / DSM 28221 / CCUG 30454 / Houston 1)</name>
    <name type="common">Rochalimaea henselae</name>
    <dbReference type="NCBI Taxonomy" id="283166"/>
    <lineage>
        <taxon>Bacteria</taxon>
        <taxon>Pseudomonadati</taxon>
        <taxon>Pseudomonadota</taxon>
        <taxon>Alphaproteobacteria</taxon>
        <taxon>Hyphomicrobiales</taxon>
        <taxon>Bartonellaceae</taxon>
        <taxon>Bartonella</taxon>
    </lineage>
</organism>
<feature type="chain" id="PRO_0000181652" description="tRNA(Ile)-lysidine synthase">
    <location>
        <begin position="1"/>
        <end position="493"/>
    </location>
</feature>
<feature type="binding site" evidence="1">
    <location>
        <begin position="26"/>
        <end position="31"/>
    </location>
    <ligand>
        <name>ATP</name>
        <dbReference type="ChEBI" id="CHEBI:30616"/>
    </ligand>
</feature>
<protein>
    <recommendedName>
        <fullName evidence="1">tRNA(Ile)-lysidine synthase</fullName>
        <ecNumber evidence="1">6.3.4.19</ecNumber>
    </recommendedName>
    <alternativeName>
        <fullName evidence="1">tRNA(Ile)-2-lysyl-cytidine synthase</fullName>
    </alternativeName>
    <alternativeName>
        <fullName evidence="1">tRNA(Ile)-lysidine synthetase</fullName>
    </alternativeName>
</protein>
<sequence length="493" mass="55899">MCVRLAGNLFKTSDFIQCQKLILAVSGGSDSLALLFLVKDHLKTLSVPPEIIVVTVDHQLRQESAREASIVAEICRAHHIQHRIVRWEGKKPKTHIASSARVARYDLLFQEAQKQGATLIMTGHTLNDQVETYQMRYQRLQKSADVLQQEAFAEMGGGVHADVLQQEAFAERCERMGVGGHGGDIAEKSDGLIYERGLSCIPREALLRGTVRLIRPLLGVKRETLRTYLRLKEKTWIEDPTNEDCNFERVRVRQSLQPKKFTCIARKVHEAALQRRQQAKNIADLILALDITVEYGRCFIAKPALFLQKHPGFPFVVGLFAVLMGGGFYLLPHKKLSTLVQKLSLHSSEKRRFTYAGSVIEYNRSGIAFWREARNIKEAIVEKGQTFLWDGRYQITNHSHEPIKVGAAGLQQLKSLFKNNNFNLENTHFPSLKSLLMISNDKGYDIPELAYHAAMQHTITIRRIMAPFDWLLSSQDAAFVNVVQPFFDIKVKG</sequence>
<gene>
    <name evidence="1" type="primary">tilS</name>
    <name type="ordered locus">BH14760</name>
</gene>
<name>TILS_BARHE</name>
<proteinExistence type="inferred from homology"/>
<evidence type="ECO:0000255" key="1">
    <source>
        <dbReference type="HAMAP-Rule" id="MF_01161"/>
    </source>
</evidence>
<reference key="1">
    <citation type="journal article" date="2004" name="Proc. Natl. Acad. Sci. U.S.A.">
        <title>The louse-borne human pathogen Bartonella quintana is a genomic derivative of the zoonotic agent Bartonella henselae.</title>
        <authorList>
            <person name="Alsmark U.C.M."/>
            <person name="Frank A.C."/>
            <person name="Karlberg E.O."/>
            <person name="Legault B.-A."/>
            <person name="Ardell D.H."/>
            <person name="Canbaeck B."/>
            <person name="Eriksson A.-S."/>
            <person name="Naeslund A.K."/>
            <person name="Handley S.A."/>
            <person name="Huvet M."/>
            <person name="La Scola B."/>
            <person name="Holmberg M."/>
            <person name="Andersson S.G.E."/>
        </authorList>
    </citation>
    <scope>NUCLEOTIDE SEQUENCE [LARGE SCALE GENOMIC DNA]</scope>
    <source>
        <strain>ATCC 49882 / DSM 28221 / CCUG 30454 / Houston 1</strain>
    </source>
</reference>
<comment type="function">
    <text evidence="1">Ligates lysine onto the cytidine present at position 34 of the AUA codon-specific tRNA(Ile) that contains the anticodon CAU, in an ATP-dependent manner. Cytidine is converted to lysidine, thus changing the amino acid specificity of the tRNA from methionine to isoleucine.</text>
</comment>
<comment type="catalytic activity">
    <reaction evidence="1">
        <text>cytidine(34) in tRNA(Ile2) + L-lysine + ATP = lysidine(34) in tRNA(Ile2) + AMP + diphosphate + H(+)</text>
        <dbReference type="Rhea" id="RHEA:43744"/>
        <dbReference type="Rhea" id="RHEA-COMP:10625"/>
        <dbReference type="Rhea" id="RHEA-COMP:10670"/>
        <dbReference type="ChEBI" id="CHEBI:15378"/>
        <dbReference type="ChEBI" id="CHEBI:30616"/>
        <dbReference type="ChEBI" id="CHEBI:32551"/>
        <dbReference type="ChEBI" id="CHEBI:33019"/>
        <dbReference type="ChEBI" id="CHEBI:82748"/>
        <dbReference type="ChEBI" id="CHEBI:83665"/>
        <dbReference type="ChEBI" id="CHEBI:456215"/>
        <dbReference type="EC" id="6.3.4.19"/>
    </reaction>
</comment>
<comment type="subcellular location">
    <subcellularLocation>
        <location evidence="1">Cytoplasm</location>
    </subcellularLocation>
</comment>
<comment type="domain">
    <text>The N-terminal region contains the highly conserved SGGXDS motif, predicted to be a P-loop motif involved in ATP binding.</text>
</comment>
<comment type="similarity">
    <text evidence="1">Belongs to the tRNA(Ile)-lysidine synthase family.</text>
</comment>
<accession>Q6G5P5</accession>